<accession>P01236</accession>
<accession>Q15199</accession>
<accession>Q92996</accession>
<gene>
    <name type="primary">PRL</name>
</gene>
<evidence type="ECO:0000250" key="1">
    <source>
        <dbReference type="UniProtKB" id="P01239"/>
    </source>
</evidence>
<evidence type="ECO:0000269" key="2">
    <source>
    </source>
</evidence>
<evidence type="ECO:0000269" key="3">
    <source>
    </source>
</evidence>
<evidence type="ECO:0000269" key="4">
    <source>
    </source>
</evidence>
<evidence type="ECO:0000269" key="5">
    <source>
    </source>
</evidence>
<evidence type="ECO:0000269" key="6">
    <source>
    </source>
</evidence>
<evidence type="ECO:0000269" key="7">
    <source>
    </source>
</evidence>
<evidence type="ECO:0000305" key="8"/>
<evidence type="ECO:0007829" key="9">
    <source>
        <dbReference type="PDB" id="1RW5"/>
    </source>
</evidence>
<evidence type="ECO:0007829" key="10">
    <source>
        <dbReference type="PDB" id="3N06"/>
    </source>
</evidence>
<evidence type="ECO:0007829" key="11">
    <source>
        <dbReference type="PDB" id="3NCC"/>
    </source>
</evidence>
<evidence type="ECO:0007829" key="12">
    <source>
        <dbReference type="PDB" id="3NCE"/>
    </source>
</evidence>
<protein>
    <recommendedName>
        <fullName>Prolactin</fullName>
        <shortName>PRL</shortName>
    </recommendedName>
</protein>
<organism>
    <name type="scientific">Homo sapiens</name>
    <name type="common">Human</name>
    <dbReference type="NCBI Taxonomy" id="9606"/>
    <lineage>
        <taxon>Eukaryota</taxon>
        <taxon>Metazoa</taxon>
        <taxon>Chordata</taxon>
        <taxon>Craniata</taxon>
        <taxon>Vertebrata</taxon>
        <taxon>Euteleostomi</taxon>
        <taxon>Mammalia</taxon>
        <taxon>Eutheria</taxon>
        <taxon>Euarchontoglires</taxon>
        <taxon>Primates</taxon>
        <taxon>Haplorrhini</taxon>
        <taxon>Catarrhini</taxon>
        <taxon>Hominidae</taxon>
        <taxon>Homo</taxon>
    </lineage>
</organism>
<proteinExistence type="evidence at protein level"/>
<reference key="1">
    <citation type="journal article" date="1981" name="J. Biol. Chem.">
        <title>Human prolactin. cDNA structural analysis and evolutionary comparisons.</title>
        <authorList>
            <person name="Cooke N.E."/>
            <person name="Coit D."/>
            <person name="Shine J."/>
            <person name="Baxter J.D."/>
            <person name="Martial J.A."/>
        </authorList>
    </citation>
    <scope>NUCLEOTIDE SEQUENCE [MRNA]</scope>
</reference>
<reference key="2">
    <citation type="journal article" date="1984" name="EMBO J.">
        <title>Isolation and characterization of the human prolactin gene.</title>
        <authorList>
            <person name="Truong A.T."/>
            <person name="Duez C."/>
            <person name="Belayew A."/>
            <person name="Renard A."/>
            <person name="Pictet R.L."/>
            <person name="Bell G.I."/>
            <person name="Martial J.A."/>
        </authorList>
    </citation>
    <scope>NUCLEOTIDE SEQUENCE [GENOMIC DNA]</scope>
</reference>
<reference key="3">
    <citation type="journal article" date="1991" name="Mol. Cell. Endocrinol.">
        <title>A placenta-specific 5'non-coding exon of human prolactin.</title>
        <authorList>
            <person name="Hiraoka Y."/>
            <person name="Tatsumi K."/>
            <person name="Shiozawa M."/>
            <person name="Aiso S."/>
            <person name="Fukasawa T."/>
            <person name="Yasuda K."/>
            <person name="Miyai K."/>
        </authorList>
    </citation>
    <scope>NUCLEOTIDE SEQUENCE [MRNA]</scope>
</reference>
<reference key="4">
    <citation type="journal article" date="2004" name="Genome Res.">
        <title>The status, quality, and expansion of the NIH full-length cDNA project: the Mammalian Gene Collection (MGC).</title>
        <authorList>
            <consortium name="The MGC Project Team"/>
        </authorList>
    </citation>
    <scope>NUCLEOTIDE SEQUENCE [LARGE SCALE MRNA]</scope>
    <source>
        <tissue>Testis</tissue>
    </source>
</reference>
<reference key="5">
    <citation type="journal article" date="1984" name="J. Biochem.">
        <title>Molecular cloning and nucleotide sequence of DNA complementary to human decidual prolactin mRNA.</title>
        <authorList>
            <person name="Takahashi H."/>
            <person name="Nabeshima Y."/>
            <person name="Nabeshima Y."/>
            <person name="Ogata K."/>
            <person name="Takeuchi S."/>
        </authorList>
    </citation>
    <scope>NUCLEOTIDE SEQUENCE [MRNA] OF 11-227</scope>
</reference>
<reference key="6">
    <citation type="journal article" date="1997" name="Breast Cancer Res. Treat.">
        <title>Expression of the prolactin gene in normal and neoplastic human breast tissues and human mammary cell lines: promoter usage and alternative mRNA splicing.</title>
        <authorList>
            <person name="Shaw-Bruha C.M."/>
            <person name="Pirrucello S.J."/>
            <person name="Shull J.D."/>
        </authorList>
    </citation>
    <scope>NUCLEOTIDE SEQUENCE [MRNA] OF 11-201</scope>
    <source>
        <tissue>Mammary gland</tissue>
    </source>
</reference>
<reference key="7">
    <citation type="journal article" date="1977" name="J. Clin. Endocrinol. Metab.">
        <title>Human pituitary prolactin (hPRL): the entire linear amino acid sequence.</title>
        <authorList>
            <person name="Shome B."/>
            <person name="Parlow A.F."/>
        </authorList>
    </citation>
    <scope>PROTEIN SEQUENCE OF 29-227</scope>
</reference>
<reference key="8">
    <citation type="journal article" date="1975" name="J. Biol. Chem.">
        <title>High sensitivity automated sequence determination of polypeptides.</title>
        <authorList>
            <person name="Jacobs J.W."/>
            <person name="Niall H.D."/>
        </authorList>
    </citation>
    <scope>PROTEIN SEQUENCE OF 29-53</scope>
</reference>
<reference key="9">
    <citation type="journal article" date="2005" name="J. Clin. Endocrinol. Metab.">
        <title>Immunoglobulin G subclasses and prolactin (PRL) isoforms in macroprolactinemia due to anti-PRL autoantibodies.</title>
        <authorList>
            <person name="Hattori N."/>
            <person name="Ikekubo K."/>
            <person name="Nakaya Y."/>
            <person name="Kitagawa K."/>
            <person name="Inagaki C."/>
        </authorList>
    </citation>
    <scope>PHOSPHORYLATION AT SER-163 AND SER-194</scope>
</reference>
<reference key="10">
    <citation type="journal article" date="2003" name="J. Mol. Biol.">
        <title>The tertiary structure and backbone dynamics of human prolactin.</title>
        <authorList>
            <person name="Keeler C."/>
            <person name="Dannies P.S."/>
            <person name="Hodsdon M.E."/>
        </authorList>
    </citation>
    <scope>STRUCTURE BY NMR OF 29-227</scope>
</reference>
<reference key="11">
    <citation type="journal article" date="2005" name="J. Mol. Biol.">
        <title>Solution structure of human prolactin.</title>
        <authorList>
            <person name="Teilum K."/>
            <person name="Hoch J.C."/>
            <person name="Goffin V."/>
            <person name="Kinet S."/>
            <person name="Martial J.A."/>
            <person name="Kragelund B.B."/>
        </authorList>
    </citation>
    <scope>STRUCTURE BY NMR OF 29-227</scope>
    <scope>INTERACTION WITH PRLR</scope>
</reference>
<reference key="12">
    <citation type="journal article" date="2007" name="J. Biol. Chem.">
        <title>Structural and thermodynamic bases for the design of pure prolactin receptor antagonists: X-ray structure of Del1-9-G129R-hPRL.</title>
        <authorList>
            <person name="Jomain J.-B."/>
            <person name="Tallet E."/>
            <person name="Broutin I."/>
            <person name="Hoos S."/>
            <person name="van Agthoven J."/>
            <person name="Ducruix A."/>
            <person name="Kelly P.A."/>
            <person name="Kragelund B.B."/>
            <person name="England P."/>
            <person name="Goffin V."/>
        </authorList>
    </citation>
    <scope>X-RAY CRYSTALLOGRAPHY (2.7 ANGSTROMS) OF 38-227</scope>
    <scope>MUTAGENESIS OF GLY-157</scope>
</reference>
<reference key="13">
    <citation type="journal article" date="2008" name="J. Biol. Chem.">
        <title>Crystal structure of a prolactin receptor antagonist bound to the extracellular domain of the prolactin receptor.</title>
        <authorList>
            <person name="Svensson L.A."/>
            <person name="Bondensgaard K."/>
            <person name="Noerskov-Lauritsen L."/>
            <person name="Christensen L."/>
            <person name="Becker P."/>
            <person name="Andersen M.D."/>
            <person name="Maltesen M.J."/>
            <person name="Rand K.D."/>
            <person name="Breinholt J."/>
        </authorList>
    </citation>
    <scope>X-RAY CRYSTALLOGRAPHY (2.5 ANGSTROMS) OF 41-227 IN COMPLEX WITH PRLR</scope>
    <scope>IDENTIFICATION BY MASS SPECTROMETRY</scope>
    <scope>DISULFIDE BONDS</scope>
</reference>
<keyword id="KW-0002">3D-structure</keyword>
<keyword id="KW-0903">Direct protein sequencing</keyword>
<keyword id="KW-1015">Disulfide bond</keyword>
<keyword id="KW-0325">Glycoprotein</keyword>
<keyword id="KW-0372">Hormone</keyword>
<keyword id="KW-0421">Lactation</keyword>
<keyword id="KW-0597">Phosphoprotein</keyword>
<keyword id="KW-1267">Proteomics identification</keyword>
<keyword id="KW-1185">Reference proteome</keyword>
<keyword id="KW-0964">Secreted</keyword>
<keyword id="KW-0732">Signal</keyword>
<dbReference type="EMBL" id="V00566">
    <property type="protein sequence ID" value="CAA23829.1"/>
    <property type="molecule type" value="mRNA"/>
</dbReference>
<dbReference type="EMBL" id="X00540">
    <property type="protein sequence ID" value="CAA25214.1"/>
    <property type="molecule type" value="Genomic_DNA"/>
</dbReference>
<dbReference type="EMBL" id="X00541">
    <property type="protein sequence ID" value="CAA25214.1"/>
    <property type="status" value="JOINED"/>
    <property type="molecule type" value="Genomic_DNA"/>
</dbReference>
<dbReference type="EMBL" id="X00543">
    <property type="protein sequence ID" value="CAA25214.1"/>
    <property type="status" value="JOINED"/>
    <property type="molecule type" value="Genomic_DNA"/>
</dbReference>
<dbReference type="EMBL" id="X00544">
    <property type="protein sequence ID" value="CAA25214.1"/>
    <property type="status" value="JOINED"/>
    <property type="molecule type" value="Genomic_DNA"/>
</dbReference>
<dbReference type="EMBL" id="X54393">
    <property type="protein sequence ID" value="CAA38263.1"/>
    <property type="status" value="ALT_FRAME"/>
    <property type="molecule type" value="mRNA"/>
</dbReference>
<dbReference type="EMBL" id="X54393">
    <property type="protein sequence ID" value="CAA38264.1"/>
    <property type="status" value="ALT_FRAME"/>
    <property type="molecule type" value="mRNA"/>
</dbReference>
<dbReference type="EMBL" id="BC015850">
    <property type="protein sequence ID" value="AAH15850.1"/>
    <property type="molecule type" value="mRNA"/>
</dbReference>
<dbReference type="EMBL" id="M29386">
    <property type="protein sequence ID" value="AAA60173.1"/>
    <property type="molecule type" value="mRNA"/>
</dbReference>
<dbReference type="EMBL" id="D00411">
    <property type="protein sequence ID" value="BAA00312.1"/>
    <property type="molecule type" value="mRNA"/>
</dbReference>
<dbReference type="EMBL" id="U75583">
    <property type="protein sequence ID" value="AAB70858.1"/>
    <property type="molecule type" value="mRNA"/>
</dbReference>
<dbReference type="CCDS" id="CCDS4548.1"/>
<dbReference type="PIR" id="A61402">
    <property type="entry name" value="A61402"/>
</dbReference>
<dbReference type="PIR" id="A90998">
    <property type="entry name" value="LCHU"/>
</dbReference>
<dbReference type="RefSeq" id="NP_000939.1">
    <property type="nucleotide sequence ID" value="NM_000948.6"/>
</dbReference>
<dbReference type="RefSeq" id="NP_001157030.1">
    <property type="nucleotide sequence ID" value="NM_001163558.3"/>
</dbReference>
<dbReference type="RefSeq" id="XP_047275032.1">
    <property type="nucleotide sequence ID" value="XM_047419076.1"/>
</dbReference>
<dbReference type="RefSeq" id="XP_054211907.1">
    <property type="nucleotide sequence ID" value="XM_054355932.1"/>
</dbReference>
<dbReference type="PDB" id="1RW5">
    <property type="method" value="NMR"/>
    <property type="chains" value="A=29-227"/>
</dbReference>
<dbReference type="PDB" id="2Q98">
    <property type="method" value="X-ray"/>
    <property type="resolution" value="2.70 A"/>
    <property type="chains" value="A=38-227"/>
</dbReference>
<dbReference type="PDB" id="3D48">
    <property type="method" value="X-ray"/>
    <property type="resolution" value="2.50 A"/>
    <property type="chains" value="P=40-227"/>
</dbReference>
<dbReference type="PDB" id="3EW3">
    <property type="method" value="X-ray"/>
    <property type="resolution" value="3.80 A"/>
    <property type="chains" value="A=39-227"/>
</dbReference>
<dbReference type="PDB" id="3MZG">
    <property type="method" value="X-ray"/>
    <property type="resolution" value="2.10 A"/>
    <property type="chains" value="A=43-227"/>
</dbReference>
<dbReference type="PDB" id="3N06">
    <property type="method" value="X-ray"/>
    <property type="resolution" value="2.00 A"/>
    <property type="chains" value="A=43-227"/>
</dbReference>
<dbReference type="PDB" id="3N0P">
    <property type="method" value="X-ray"/>
    <property type="resolution" value="2.10 A"/>
    <property type="chains" value="A=43-227"/>
</dbReference>
<dbReference type="PDB" id="3NCB">
    <property type="method" value="X-ray"/>
    <property type="resolution" value="2.10 A"/>
    <property type="chains" value="A=43-227"/>
</dbReference>
<dbReference type="PDB" id="3NCC">
    <property type="method" value="X-ray"/>
    <property type="resolution" value="2.50 A"/>
    <property type="chains" value="A=43-227"/>
</dbReference>
<dbReference type="PDB" id="3NCE">
    <property type="method" value="X-ray"/>
    <property type="resolution" value="2.00 A"/>
    <property type="chains" value="A=43-227"/>
</dbReference>
<dbReference type="PDB" id="3NCF">
    <property type="method" value="X-ray"/>
    <property type="resolution" value="2.80 A"/>
    <property type="chains" value="A=43-227"/>
</dbReference>
<dbReference type="PDB" id="3NPZ">
    <property type="method" value="X-ray"/>
    <property type="resolution" value="3.35 A"/>
    <property type="chains" value="A=29-227"/>
</dbReference>
<dbReference type="PDBsum" id="1RW5"/>
<dbReference type="PDBsum" id="2Q98"/>
<dbReference type="PDBsum" id="3D48"/>
<dbReference type="PDBsum" id="3EW3"/>
<dbReference type="PDBsum" id="3MZG"/>
<dbReference type="PDBsum" id="3N06"/>
<dbReference type="PDBsum" id="3N0P"/>
<dbReference type="PDBsum" id="3NCB"/>
<dbReference type="PDBsum" id="3NCC"/>
<dbReference type="PDBsum" id="3NCE"/>
<dbReference type="PDBsum" id="3NCF"/>
<dbReference type="PDBsum" id="3NPZ"/>
<dbReference type="BMRB" id="P01236"/>
<dbReference type="SMR" id="P01236"/>
<dbReference type="BioGRID" id="111602">
    <property type="interactions" value="7"/>
</dbReference>
<dbReference type="DIP" id="DIP-59635N"/>
<dbReference type="FunCoup" id="P01236">
    <property type="interactions" value="1066"/>
</dbReference>
<dbReference type="IntAct" id="P01236">
    <property type="interactions" value="4"/>
</dbReference>
<dbReference type="STRING" id="9606.ENSP00000302150"/>
<dbReference type="GlyCosmos" id="P01236">
    <property type="glycosylation" value="1 site, No reported glycans"/>
</dbReference>
<dbReference type="GlyGen" id="P01236">
    <property type="glycosylation" value="1 site"/>
</dbReference>
<dbReference type="iPTMnet" id="P01236"/>
<dbReference type="PhosphoSitePlus" id="P01236"/>
<dbReference type="BioMuta" id="PRL"/>
<dbReference type="MassIVE" id="P01236"/>
<dbReference type="PaxDb" id="9606-ENSP00000302150"/>
<dbReference type="PeptideAtlas" id="P01236"/>
<dbReference type="ProteomicsDB" id="51352"/>
<dbReference type="Antibodypedia" id="10502">
    <property type="antibodies" value="1680 antibodies from 45 providers"/>
</dbReference>
<dbReference type="DNASU" id="5617"/>
<dbReference type="Ensembl" id="ENST00000306482.2">
    <property type="protein sequence ID" value="ENSP00000302150.1"/>
    <property type="gene ID" value="ENSG00000172179.13"/>
</dbReference>
<dbReference type="GeneID" id="5617"/>
<dbReference type="KEGG" id="hsa:5617"/>
<dbReference type="MANE-Select" id="ENST00000306482.2">
    <property type="protein sequence ID" value="ENSP00000302150.1"/>
    <property type="RefSeq nucleotide sequence ID" value="NM_000948.6"/>
    <property type="RefSeq protein sequence ID" value="NP_000939.1"/>
</dbReference>
<dbReference type="AGR" id="HGNC:9445"/>
<dbReference type="CTD" id="5617"/>
<dbReference type="DisGeNET" id="5617"/>
<dbReference type="GeneCards" id="PRL"/>
<dbReference type="HGNC" id="HGNC:9445">
    <property type="gene designation" value="PRL"/>
</dbReference>
<dbReference type="HPA" id="ENSG00000172179">
    <property type="expression patterns" value="Tissue enriched (pituitary)"/>
</dbReference>
<dbReference type="MIM" id="176760">
    <property type="type" value="gene"/>
</dbReference>
<dbReference type="neXtProt" id="NX_P01236"/>
<dbReference type="OpenTargets" id="ENSG00000172179"/>
<dbReference type="PharmGKB" id="PA33790"/>
<dbReference type="VEuPathDB" id="HostDB:ENSG00000172179"/>
<dbReference type="eggNOG" id="ENOG502QYU3">
    <property type="taxonomic scope" value="Eukaryota"/>
</dbReference>
<dbReference type="GeneTree" id="ENSGT00950000182818"/>
<dbReference type="InParanoid" id="P01236"/>
<dbReference type="OrthoDB" id="9946219at2759"/>
<dbReference type="PAN-GO" id="P01236">
    <property type="GO annotations" value="9 GO annotations based on evolutionary models"/>
</dbReference>
<dbReference type="PhylomeDB" id="P01236"/>
<dbReference type="TreeFam" id="TF332592"/>
<dbReference type="PathwayCommons" id="P01236"/>
<dbReference type="Reactome" id="R-HSA-1170546">
    <property type="pathway name" value="Prolactin receptor signaling"/>
</dbReference>
<dbReference type="Reactome" id="R-HSA-977225">
    <property type="pathway name" value="Amyloid fiber formation"/>
</dbReference>
<dbReference type="Reactome" id="R-HSA-982772">
    <property type="pathway name" value="Growth hormone receptor signaling"/>
</dbReference>
<dbReference type="SignaLink" id="P01236"/>
<dbReference type="SIGNOR" id="P01236"/>
<dbReference type="BioGRID-ORCS" id="5617">
    <property type="hits" value="7 hits in 1140 CRISPR screens"/>
</dbReference>
<dbReference type="ChiTaRS" id="PRL">
    <property type="organism name" value="human"/>
</dbReference>
<dbReference type="EvolutionaryTrace" id="P01236"/>
<dbReference type="GeneWiki" id="Prolactin"/>
<dbReference type="GenomeRNAi" id="5617"/>
<dbReference type="Pharos" id="P01236">
    <property type="development level" value="Tbio"/>
</dbReference>
<dbReference type="PRO" id="PR:P01236"/>
<dbReference type="Proteomes" id="UP000005640">
    <property type="component" value="Chromosome 6"/>
</dbReference>
<dbReference type="RNAct" id="P01236">
    <property type="molecule type" value="protein"/>
</dbReference>
<dbReference type="Bgee" id="ENSG00000172179">
    <property type="expression patterns" value="Expressed in pituitary gland and 96 other cell types or tissues"/>
</dbReference>
<dbReference type="ExpressionAtlas" id="P01236">
    <property type="expression patterns" value="baseline and differential"/>
</dbReference>
<dbReference type="GO" id="GO:0031904">
    <property type="term" value="C:endosome lumen"/>
    <property type="evidence" value="ECO:0000304"/>
    <property type="project" value="Reactome"/>
</dbReference>
<dbReference type="GO" id="GO:0005576">
    <property type="term" value="C:extracellular region"/>
    <property type="evidence" value="ECO:0000304"/>
    <property type="project" value="Reactome"/>
</dbReference>
<dbReference type="GO" id="GO:0005615">
    <property type="term" value="C:extracellular space"/>
    <property type="evidence" value="ECO:0000318"/>
    <property type="project" value="GO_Central"/>
</dbReference>
<dbReference type="GO" id="GO:0005179">
    <property type="term" value="F:hormone activity"/>
    <property type="evidence" value="ECO:0000318"/>
    <property type="project" value="GO_Central"/>
</dbReference>
<dbReference type="GO" id="GO:0005148">
    <property type="term" value="F:prolactin receptor binding"/>
    <property type="evidence" value="ECO:0000318"/>
    <property type="project" value="GO_Central"/>
</dbReference>
<dbReference type="GO" id="GO:0007166">
    <property type="term" value="P:cell surface receptor signaling pathway"/>
    <property type="evidence" value="ECO:0000318"/>
    <property type="project" value="GO_Central"/>
</dbReference>
<dbReference type="GO" id="GO:0007565">
    <property type="term" value="P:female pregnancy"/>
    <property type="evidence" value="ECO:0000318"/>
    <property type="project" value="GO_Central"/>
</dbReference>
<dbReference type="GO" id="GO:0007595">
    <property type="term" value="P:lactation"/>
    <property type="evidence" value="ECO:0007669"/>
    <property type="project" value="UniProtKB-KW"/>
</dbReference>
<dbReference type="GO" id="GO:0030879">
    <property type="term" value="P:mammary gland development"/>
    <property type="evidence" value="ECO:0000318"/>
    <property type="project" value="GO_Central"/>
</dbReference>
<dbReference type="GO" id="GO:0016525">
    <property type="term" value="P:negative regulation of angiogenesis"/>
    <property type="evidence" value="ECO:0000303"/>
    <property type="project" value="BHF-UCL"/>
</dbReference>
<dbReference type="GO" id="GO:0001937">
    <property type="term" value="P:negative regulation of endothelial cell proliferation"/>
    <property type="evidence" value="ECO:0000314"/>
    <property type="project" value="BHF-UCL"/>
</dbReference>
<dbReference type="GO" id="GO:0043123">
    <property type="term" value="P:positive regulation of canonical NF-kappaB signal transduction"/>
    <property type="evidence" value="ECO:0000314"/>
    <property type="project" value="BHF-UCL"/>
</dbReference>
<dbReference type="GO" id="GO:1903489">
    <property type="term" value="P:positive regulation of lactation"/>
    <property type="evidence" value="ECO:0000318"/>
    <property type="project" value="GO_Central"/>
</dbReference>
<dbReference type="GO" id="GO:1902895">
    <property type="term" value="P:positive regulation of miRNA transcription"/>
    <property type="evidence" value="ECO:0000314"/>
    <property type="project" value="BHF-UCL"/>
</dbReference>
<dbReference type="GO" id="GO:0046427">
    <property type="term" value="P:positive regulation of receptor signaling pathway via JAK-STAT"/>
    <property type="evidence" value="ECO:0000314"/>
    <property type="project" value="BHF-UCL"/>
</dbReference>
<dbReference type="GO" id="GO:0038161">
    <property type="term" value="P:prolactin signaling pathway"/>
    <property type="evidence" value="ECO:0000314"/>
    <property type="project" value="BHF-UCL"/>
</dbReference>
<dbReference type="GO" id="GO:0031667">
    <property type="term" value="P:response to nutrient levels"/>
    <property type="evidence" value="ECO:0000318"/>
    <property type="project" value="GO_Central"/>
</dbReference>
<dbReference type="CDD" id="cd10288">
    <property type="entry name" value="prolactin_like"/>
    <property type="match status" value="1"/>
</dbReference>
<dbReference type="FunFam" id="1.20.1250.10:FF:000003">
    <property type="entry name" value="Prolactin"/>
    <property type="match status" value="1"/>
</dbReference>
<dbReference type="Gene3D" id="1.20.1250.10">
    <property type="match status" value="1"/>
</dbReference>
<dbReference type="InterPro" id="IPR009079">
    <property type="entry name" value="4_helix_cytokine-like_core"/>
</dbReference>
<dbReference type="InterPro" id="IPR001400">
    <property type="entry name" value="Somatotropin/Prolactin"/>
</dbReference>
<dbReference type="InterPro" id="IPR018116">
    <property type="entry name" value="Somatotropin_CS"/>
</dbReference>
<dbReference type="PANTHER" id="PTHR11417:SF5">
    <property type="entry name" value="PROLACTIN"/>
    <property type="match status" value="1"/>
</dbReference>
<dbReference type="PANTHER" id="PTHR11417">
    <property type="entry name" value="SOMATOTROPIN,PROLACTIN"/>
    <property type="match status" value="1"/>
</dbReference>
<dbReference type="Pfam" id="PF00103">
    <property type="entry name" value="Hormone_1"/>
    <property type="match status" value="1"/>
</dbReference>
<dbReference type="PRINTS" id="PR00836">
    <property type="entry name" value="SOMATOTROPIN"/>
</dbReference>
<dbReference type="SUPFAM" id="SSF47266">
    <property type="entry name" value="4-helical cytokines"/>
    <property type="match status" value="1"/>
</dbReference>
<dbReference type="PROSITE" id="PS00266">
    <property type="entry name" value="SOMATOTROPIN_1"/>
    <property type="match status" value="1"/>
</dbReference>
<dbReference type="PROSITE" id="PS00338">
    <property type="entry name" value="SOMATOTROPIN_2"/>
    <property type="match status" value="1"/>
</dbReference>
<name>PRL_HUMAN</name>
<comment type="function">
    <text>Prolactin acts primarily on the mammary gland by promoting lactation.</text>
</comment>
<comment type="subunit">
    <text evidence="4 6">Interacts with PRLR.</text>
</comment>
<comment type="interaction">
    <interactant intactId="EBI-6903064">
        <id>P01236</id>
    </interactant>
    <interactant intactId="EBI-16439278">
        <id>Q6FHY5</id>
        <label>MEOX2</label>
    </interactant>
    <organismsDiffer>false</organismsDiffer>
    <experiments>3</experiments>
</comment>
<comment type="interaction">
    <interactant intactId="EBI-6903064">
        <id>P01236</id>
    </interactant>
    <interactant intactId="EBI-15968347">
        <id>P16471-1</id>
        <label>PRLR</label>
    </interactant>
    <organismsDiffer>false</organismsDiffer>
    <experiments>2</experiments>
</comment>
<comment type="interaction">
    <interactant intactId="EBI-6903064">
        <id>P01236</id>
    </interactant>
    <interactant intactId="EBI-6903057">
        <id>P16471-7</id>
        <label>PRLR</label>
    </interactant>
    <organismsDiffer>false</organismsDiffer>
    <experiments>4</experiments>
</comment>
<comment type="subcellular location">
    <subcellularLocation>
        <location>Secreted</location>
    </subcellularLocation>
</comment>
<comment type="similarity">
    <text evidence="8">Belongs to the somatotropin/prolactin family.</text>
</comment>
<comment type="sequence caution" evidence="8">
    <conflict type="frameshift">
        <sequence resource="EMBL-CDS" id="CAA38264"/>
    </conflict>
</comment>
<comment type="online information" name="Wikipedia">
    <link uri="https://en.wikipedia.org/wiki/Prolactin"/>
    <text>Prolactin entry</text>
</comment>
<sequence length="227" mass="25876">MNIKGSPWKGSLLLLLVSNLLLCQSVAPLPICPGGAARCQVTLRDLFDRAVVLSHYIHNLSSEMFSEFDKRYTHGRGFITKAINSCHTSSLATPEDKEQAQQMNQKDFLSLIVSILRSWNEPLYHLVTEVRGMQEAPEAILSKAVEIEEQTKRLLEGMELIVSQVHPETKENEIYPVWSGLPSLQMADEESRLSAYYNLLHCLRRDSHKIDNYLKLLKCRIIHNNNC</sequence>
<feature type="signal peptide" evidence="2 7">
    <location>
        <begin position="1"/>
        <end position="28"/>
    </location>
</feature>
<feature type="chain" id="PRO_0000032916" description="Prolactin">
    <location>
        <begin position="29"/>
        <end position="227"/>
    </location>
</feature>
<feature type="modified residue" description="Phosphoserine" evidence="1">
    <location>
        <position position="54"/>
    </location>
</feature>
<feature type="modified residue" description="Phosphoserine" evidence="1">
    <location>
        <position position="62"/>
    </location>
</feature>
<feature type="modified residue" description="Phosphoserine" evidence="1">
    <location>
        <position position="118"/>
    </location>
</feature>
<feature type="modified residue" description="Phosphoserine" evidence="3">
    <location>
        <position position="163"/>
    </location>
</feature>
<feature type="modified residue" description="Phosphoserine" evidence="3">
    <location>
        <position position="194"/>
    </location>
</feature>
<feature type="glycosylation site" description="N-linked (GlcNAc...) asparagine; partial">
    <location>
        <position position="59"/>
    </location>
</feature>
<feature type="disulfide bond" evidence="6">
    <location>
        <begin position="32"/>
        <end position="39"/>
    </location>
</feature>
<feature type="disulfide bond" evidence="6">
    <location>
        <begin position="86"/>
        <end position="202"/>
    </location>
</feature>
<feature type="disulfide bond" evidence="6">
    <location>
        <begin position="219"/>
        <end position="227"/>
    </location>
</feature>
<feature type="mutagenesis site" description="Inhibits signaling via PRLR; mutant PRL acts as a PRLR antagonist." evidence="5">
    <original>G</original>
    <variation>D</variation>
    <variation>F</variation>
    <variation>L</variation>
    <variation>N</variation>
    <variation>R</variation>
    <variation>V</variation>
    <variation>Y</variation>
    <location>
        <position position="157"/>
    </location>
</feature>
<feature type="sequence conflict" description="In Ref. 6; AAB70858." evidence="8" ref="6">
    <original>T</original>
    <variation>A</variation>
    <location>
        <position position="42"/>
    </location>
</feature>
<feature type="sequence conflict" description="In Ref. 7; AA sequence." evidence="8" ref="7">
    <original>SL</original>
    <variation>VS</variation>
    <location>
        <begin position="110"/>
        <end position="111"/>
    </location>
</feature>
<feature type="sequence conflict" description="In Ref. 7; AA sequence." evidence="8" ref="7">
    <original>VS</original>
    <variation>L</variation>
    <location>
        <begin position="113"/>
        <end position="114"/>
    </location>
</feature>
<feature type="sequence conflict" description="In Ref. 6; AAB70858." evidence="8" ref="6">
    <original>S</original>
    <variation>P</variation>
    <location>
        <position position="118"/>
    </location>
</feature>
<feature type="sequence conflict" description="In Ref. 5; BAA00312." evidence="8" ref="5">
    <original>E</original>
    <variation>Q</variation>
    <location>
        <position position="148"/>
    </location>
</feature>
<feature type="sequence conflict" description="In Ref. 7; AA sequence." evidence="8" ref="7">
    <original>N</original>
    <variation>D</variation>
    <location>
        <position position="172"/>
    </location>
</feature>
<feature type="sequence conflict" description="In Ref. 7; AA sequence." evidence="8" ref="7">
    <original>ES</original>
    <variation>SE</variation>
    <location>
        <begin position="190"/>
        <end position="191"/>
    </location>
</feature>
<feature type="sequence conflict" description="In Ref. 5; AAA60173/BAA00312." evidence="8" ref="5">
    <original>D</original>
    <variation>H</variation>
    <location>
        <position position="206"/>
    </location>
</feature>
<feature type="strand" evidence="9">
    <location>
        <begin position="31"/>
        <end position="34"/>
    </location>
</feature>
<feature type="helix" evidence="10">
    <location>
        <begin position="43"/>
        <end position="72"/>
    </location>
</feature>
<feature type="turn" evidence="10">
    <location>
        <begin position="73"/>
        <end position="75"/>
    </location>
</feature>
<feature type="helix" evidence="10">
    <location>
        <begin position="78"/>
        <end position="82"/>
    </location>
</feature>
<feature type="turn" evidence="10">
    <location>
        <begin position="87"/>
        <end position="90"/>
    </location>
</feature>
<feature type="helix" evidence="10">
    <location>
        <begin position="97"/>
        <end position="102"/>
    </location>
</feature>
<feature type="helix" evidence="10">
    <location>
        <begin position="105"/>
        <end position="118"/>
    </location>
</feature>
<feature type="helix" evidence="10">
    <location>
        <begin position="120"/>
        <end position="131"/>
    </location>
</feature>
<feature type="strand" evidence="12">
    <location>
        <begin position="133"/>
        <end position="135"/>
    </location>
</feature>
<feature type="helix" evidence="10">
    <location>
        <begin position="138"/>
        <end position="165"/>
    </location>
</feature>
<feature type="strand" evidence="11">
    <location>
        <begin position="166"/>
        <end position="168"/>
    </location>
</feature>
<feature type="helix" evidence="10">
    <location>
        <begin position="181"/>
        <end position="185"/>
    </location>
</feature>
<feature type="helix" evidence="10">
    <location>
        <begin position="189"/>
        <end position="223"/>
    </location>
</feature>